<sequence>MPWLQVRLAISPEQAETYEDALLEVGAVSVTFMDAEDQPIFEPDLNTTPLWSHTHLLALFEADADPEQVFAHLRLLTGAELPEHQAEVIEDQDWERSWMDNFQPMRFGRRLWIVPSWHEAPEKDAVNLLLDPGLAFGTGTHPTTALCLEWLDGQQLDGTQVLDFGCGSGILAIAALLLGAREAVGTDIDVQAIEASRDNAQRNGVADEKLALYLPEHMPAMQADVLVANILAGPLVSLAPQLSGLVRPGGLLALSGILAEQGEEVAAAYAADFDLDPIVVRDGWVRISGRRR</sequence>
<gene>
    <name evidence="1" type="primary">prmA</name>
    <name type="ordered locus">PputGB1_4871</name>
</gene>
<name>PRMA_PSEPG</name>
<reference key="1">
    <citation type="submission" date="2008-01" db="EMBL/GenBank/DDBJ databases">
        <title>Complete sequence of Pseudomonas putida GB-1.</title>
        <authorList>
            <consortium name="US DOE Joint Genome Institute"/>
            <person name="Copeland A."/>
            <person name="Lucas S."/>
            <person name="Lapidus A."/>
            <person name="Barry K."/>
            <person name="Glavina del Rio T."/>
            <person name="Dalin E."/>
            <person name="Tice H."/>
            <person name="Pitluck S."/>
            <person name="Bruce D."/>
            <person name="Goodwin L."/>
            <person name="Chertkov O."/>
            <person name="Brettin T."/>
            <person name="Detter J.C."/>
            <person name="Han C."/>
            <person name="Kuske C.R."/>
            <person name="Schmutz J."/>
            <person name="Larimer F."/>
            <person name="Land M."/>
            <person name="Hauser L."/>
            <person name="Kyrpides N."/>
            <person name="Kim E."/>
            <person name="McCarthy J.K."/>
            <person name="Richardson P."/>
        </authorList>
    </citation>
    <scope>NUCLEOTIDE SEQUENCE [LARGE SCALE GENOMIC DNA]</scope>
    <source>
        <strain>GB-1</strain>
    </source>
</reference>
<dbReference type="EC" id="2.1.1.-" evidence="1"/>
<dbReference type="EMBL" id="CP000926">
    <property type="protein sequence ID" value="ABZ00756.1"/>
    <property type="molecule type" value="Genomic_DNA"/>
</dbReference>
<dbReference type="RefSeq" id="WP_012274387.1">
    <property type="nucleotide sequence ID" value="NC_010322.1"/>
</dbReference>
<dbReference type="SMR" id="B0KJZ2"/>
<dbReference type="KEGG" id="ppg:PputGB1_4871"/>
<dbReference type="eggNOG" id="COG2264">
    <property type="taxonomic scope" value="Bacteria"/>
</dbReference>
<dbReference type="HOGENOM" id="CLU_049382_4_1_6"/>
<dbReference type="Proteomes" id="UP000002157">
    <property type="component" value="Chromosome"/>
</dbReference>
<dbReference type="GO" id="GO:0005829">
    <property type="term" value="C:cytosol"/>
    <property type="evidence" value="ECO:0007669"/>
    <property type="project" value="TreeGrafter"/>
</dbReference>
<dbReference type="GO" id="GO:0016279">
    <property type="term" value="F:protein-lysine N-methyltransferase activity"/>
    <property type="evidence" value="ECO:0007669"/>
    <property type="project" value="TreeGrafter"/>
</dbReference>
<dbReference type="GO" id="GO:0032259">
    <property type="term" value="P:methylation"/>
    <property type="evidence" value="ECO:0007669"/>
    <property type="project" value="UniProtKB-KW"/>
</dbReference>
<dbReference type="Gene3D" id="3.40.50.150">
    <property type="entry name" value="Vaccinia Virus protein VP39"/>
    <property type="match status" value="1"/>
</dbReference>
<dbReference type="HAMAP" id="MF_00735">
    <property type="entry name" value="Methyltr_PrmA"/>
    <property type="match status" value="1"/>
</dbReference>
<dbReference type="InterPro" id="IPR050078">
    <property type="entry name" value="Ribosomal_L11_MeTrfase_PrmA"/>
</dbReference>
<dbReference type="InterPro" id="IPR004498">
    <property type="entry name" value="Ribosomal_PrmA_MeTrfase"/>
</dbReference>
<dbReference type="InterPro" id="IPR029063">
    <property type="entry name" value="SAM-dependent_MTases_sf"/>
</dbReference>
<dbReference type="NCBIfam" id="TIGR00406">
    <property type="entry name" value="prmA"/>
    <property type="match status" value="1"/>
</dbReference>
<dbReference type="PANTHER" id="PTHR43648">
    <property type="entry name" value="ELECTRON TRANSFER FLAVOPROTEIN BETA SUBUNIT LYSINE METHYLTRANSFERASE"/>
    <property type="match status" value="1"/>
</dbReference>
<dbReference type="PANTHER" id="PTHR43648:SF1">
    <property type="entry name" value="ELECTRON TRANSFER FLAVOPROTEIN BETA SUBUNIT LYSINE METHYLTRANSFERASE"/>
    <property type="match status" value="1"/>
</dbReference>
<dbReference type="Pfam" id="PF06325">
    <property type="entry name" value="PrmA"/>
    <property type="match status" value="1"/>
</dbReference>
<dbReference type="PIRSF" id="PIRSF000401">
    <property type="entry name" value="RPL11_MTase"/>
    <property type="match status" value="1"/>
</dbReference>
<dbReference type="SUPFAM" id="SSF53335">
    <property type="entry name" value="S-adenosyl-L-methionine-dependent methyltransferases"/>
    <property type="match status" value="1"/>
</dbReference>
<organism>
    <name type="scientific">Pseudomonas putida (strain GB-1)</name>
    <dbReference type="NCBI Taxonomy" id="76869"/>
    <lineage>
        <taxon>Bacteria</taxon>
        <taxon>Pseudomonadati</taxon>
        <taxon>Pseudomonadota</taxon>
        <taxon>Gammaproteobacteria</taxon>
        <taxon>Pseudomonadales</taxon>
        <taxon>Pseudomonadaceae</taxon>
        <taxon>Pseudomonas</taxon>
    </lineage>
</organism>
<accession>B0KJZ2</accession>
<feature type="chain" id="PRO_1000083357" description="Ribosomal protein L11 methyltransferase">
    <location>
        <begin position="1"/>
        <end position="292"/>
    </location>
</feature>
<feature type="binding site" evidence="1">
    <location>
        <position position="144"/>
    </location>
    <ligand>
        <name>S-adenosyl-L-methionine</name>
        <dbReference type="ChEBI" id="CHEBI:59789"/>
    </ligand>
</feature>
<feature type="binding site" evidence="1">
    <location>
        <position position="165"/>
    </location>
    <ligand>
        <name>S-adenosyl-L-methionine</name>
        <dbReference type="ChEBI" id="CHEBI:59789"/>
    </ligand>
</feature>
<feature type="binding site" evidence="1">
    <location>
        <position position="187"/>
    </location>
    <ligand>
        <name>S-adenosyl-L-methionine</name>
        <dbReference type="ChEBI" id="CHEBI:59789"/>
    </ligand>
</feature>
<feature type="binding site" evidence="1">
    <location>
        <position position="229"/>
    </location>
    <ligand>
        <name>S-adenosyl-L-methionine</name>
        <dbReference type="ChEBI" id="CHEBI:59789"/>
    </ligand>
</feature>
<comment type="function">
    <text evidence="1">Methylates ribosomal protein L11.</text>
</comment>
<comment type="catalytic activity">
    <reaction evidence="1">
        <text>L-lysyl-[protein] + 3 S-adenosyl-L-methionine = N(6),N(6),N(6)-trimethyl-L-lysyl-[protein] + 3 S-adenosyl-L-homocysteine + 3 H(+)</text>
        <dbReference type="Rhea" id="RHEA:54192"/>
        <dbReference type="Rhea" id="RHEA-COMP:9752"/>
        <dbReference type="Rhea" id="RHEA-COMP:13826"/>
        <dbReference type="ChEBI" id="CHEBI:15378"/>
        <dbReference type="ChEBI" id="CHEBI:29969"/>
        <dbReference type="ChEBI" id="CHEBI:57856"/>
        <dbReference type="ChEBI" id="CHEBI:59789"/>
        <dbReference type="ChEBI" id="CHEBI:61961"/>
    </reaction>
</comment>
<comment type="subcellular location">
    <subcellularLocation>
        <location evidence="1">Cytoplasm</location>
    </subcellularLocation>
</comment>
<comment type="similarity">
    <text evidence="1">Belongs to the methyltransferase superfamily. PrmA family.</text>
</comment>
<keyword id="KW-0963">Cytoplasm</keyword>
<keyword id="KW-0489">Methyltransferase</keyword>
<keyword id="KW-0949">S-adenosyl-L-methionine</keyword>
<keyword id="KW-0808">Transferase</keyword>
<evidence type="ECO:0000255" key="1">
    <source>
        <dbReference type="HAMAP-Rule" id="MF_00735"/>
    </source>
</evidence>
<proteinExistence type="inferred from homology"/>
<protein>
    <recommendedName>
        <fullName evidence="1">Ribosomal protein L11 methyltransferase</fullName>
        <shortName evidence="1">L11 Mtase</shortName>
        <ecNumber evidence="1">2.1.1.-</ecNumber>
    </recommendedName>
</protein>